<comment type="function">
    <text evidence="1">Acts as a chaperone.</text>
</comment>
<comment type="induction">
    <text evidence="1">By stress conditions e.g. heat shock.</text>
</comment>
<comment type="similarity">
    <text evidence="1">Belongs to the heat shock protein 70 family.</text>
</comment>
<reference key="1">
    <citation type="journal article" date="2004" name="Genome Res.">
        <title>The genome sequence of Mycoplasma mycoides subsp. mycoides SC type strain PG1T, the causative agent of contagious bovine pleuropneumonia (CBPP).</title>
        <authorList>
            <person name="Westberg J."/>
            <person name="Persson A."/>
            <person name="Holmberg A."/>
            <person name="Goesmann A."/>
            <person name="Lundeberg J."/>
            <person name="Johansson K.-E."/>
            <person name="Pettersson B."/>
            <person name="Uhlen M."/>
        </authorList>
    </citation>
    <scope>NUCLEOTIDE SEQUENCE [LARGE SCALE GENOMIC DNA]</scope>
    <source>
        <strain>CCUG 32753 / NCTC 10114 / PG1</strain>
    </source>
</reference>
<gene>
    <name evidence="1" type="primary">dnaK</name>
    <name type="ordered locus">MSC_0610</name>
</gene>
<organism>
    <name type="scientific">Mycoplasma mycoides subsp. mycoides SC (strain CCUG 32753 / NCTC 10114 / PG1)</name>
    <dbReference type="NCBI Taxonomy" id="272632"/>
    <lineage>
        <taxon>Bacteria</taxon>
        <taxon>Bacillati</taxon>
        <taxon>Mycoplasmatota</taxon>
        <taxon>Mollicutes</taxon>
        <taxon>Mycoplasmataceae</taxon>
        <taxon>Mycoplasma</taxon>
    </lineage>
</organism>
<sequence>MAKEKIIGIDLGTTNSVVSVIEGGQPIILENPEGQRTTPSVVAFKNSDIIVGGAAKRQAVTNPNVVQSIKSKMGTTSKVNLEGKDYSPEQISAEILRYMKNYAEAKLGQKVTKAVITVPAYFNDAQRKATKDAGTIAGLQVERIINEPTAAALAYGLDKQDKEETILVYDLGGGTFDVSILAIGGGSFDVIATSGNNKLGGDNFDEEIIKWLLGKIKAEYNIDLSKEKMALQRLKDEAEKAKINLSSQLEVEINLPFIAMNESGPISFATTLTRSEFNKITKHLVDLTIQPVKDALSAAKKTPSEINEVLLVGGSTRIPAVQELVKSLLNKEPNRSINPDEVVAMGAAVQGGVLAGEVTDILLLDVTPLSLGIETMGGVMTKLIERNTTIPAKRTQIFSTATDNQPAVDINVLQGERAMAADNKSLGQFQLTGIQPAPRGVPQIEVTFEIDANGIVSVSAKDKNTNEEKTITISNSGNLSEAEVERMIKEAQENAANDEVKKKNIELKNKAENYINIIENSLLQAGDKISAEQKEQSQKMVDEIKELVKNENYEALEQKMAELEQAMAQAAEFANKQNESDPNNNSSEQNN</sequence>
<keyword id="KW-0067">ATP-binding</keyword>
<keyword id="KW-0143">Chaperone</keyword>
<keyword id="KW-0547">Nucleotide-binding</keyword>
<keyword id="KW-0597">Phosphoprotein</keyword>
<keyword id="KW-1185">Reference proteome</keyword>
<keyword id="KW-0346">Stress response</keyword>
<evidence type="ECO:0000255" key="1">
    <source>
        <dbReference type="HAMAP-Rule" id="MF_00332"/>
    </source>
</evidence>
<evidence type="ECO:0000256" key="2">
    <source>
        <dbReference type="SAM" id="MobiDB-lite"/>
    </source>
</evidence>
<feature type="chain" id="PRO_0000225982" description="Chaperone protein DnaK">
    <location>
        <begin position="1"/>
        <end position="591"/>
    </location>
</feature>
<feature type="region of interest" description="Disordered" evidence="2">
    <location>
        <begin position="568"/>
        <end position="591"/>
    </location>
</feature>
<feature type="compositionally biased region" description="Low complexity" evidence="2">
    <location>
        <begin position="568"/>
        <end position="577"/>
    </location>
</feature>
<feature type="compositionally biased region" description="Polar residues" evidence="2">
    <location>
        <begin position="580"/>
        <end position="591"/>
    </location>
</feature>
<feature type="modified residue" description="Phosphothreonine; by autocatalysis" evidence="1">
    <location>
        <position position="175"/>
    </location>
</feature>
<dbReference type="EMBL" id="BX293980">
    <property type="protein sequence ID" value="CAE77232.1"/>
    <property type="molecule type" value="Genomic_DNA"/>
</dbReference>
<dbReference type="RefSeq" id="NP_975590.1">
    <property type="nucleotide sequence ID" value="NC_005364.2"/>
</dbReference>
<dbReference type="RefSeq" id="WP_011166786.1">
    <property type="nucleotide sequence ID" value="NC_005364.2"/>
</dbReference>
<dbReference type="SMR" id="Q6MT06"/>
<dbReference type="STRING" id="272632.MSC_0610"/>
<dbReference type="KEGG" id="mmy:MSC_0610"/>
<dbReference type="PATRIC" id="fig|272632.4.peg.657"/>
<dbReference type="eggNOG" id="COG0443">
    <property type="taxonomic scope" value="Bacteria"/>
</dbReference>
<dbReference type="HOGENOM" id="CLU_005965_2_4_14"/>
<dbReference type="Proteomes" id="UP000001016">
    <property type="component" value="Chromosome"/>
</dbReference>
<dbReference type="GO" id="GO:0005524">
    <property type="term" value="F:ATP binding"/>
    <property type="evidence" value="ECO:0007669"/>
    <property type="project" value="UniProtKB-UniRule"/>
</dbReference>
<dbReference type="GO" id="GO:0140662">
    <property type="term" value="F:ATP-dependent protein folding chaperone"/>
    <property type="evidence" value="ECO:0007669"/>
    <property type="project" value="InterPro"/>
</dbReference>
<dbReference type="GO" id="GO:0051082">
    <property type="term" value="F:unfolded protein binding"/>
    <property type="evidence" value="ECO:0007669"/>
    <property type="project" value="InterPro"/>
</dbReference>
<dbReference type="CDD" id="cd10234">
    <property type="entry name" value="ASKHA_NBD_HSP70_DnaK-like"/>
    <property type="match status" value="1"/>
</dbReference>
<dbReference type="FunFam" id="2.60.34.10:FF:000014">
    <property type="entry name" value="Chaperone protein DnaK HSP70"/>
    <property type="match status" value="1"/>
</dbReference>
<dbReference type="FunFam" id="3.30.420.40:FF:000071">
    <property type="entry name" value="Molecular chaperone DnaK"/>
    <property type="match status" value="1"/>
</dbReference>
<dbReference type="FunFam" id="3.90.640.10:FF:000003">
    <property type="entry name" value="Molecular chaperone DnaK"/>
    <property type="match status" value="1"/>
</dbReference>
<dbReference type="Gene3D" id="3.30.420.40">
    <property type="match status" value="2"/>
</dbReference>
<dbReference type="Gene3D" id="3.90.640.10">
    <property type="entry name" value="Actin, Chain A, domain 4"/>
    <property type="match status" value="1"/>
</dbReference>
<dbReference type="Gene3D" id="2.60.34.10">
    <property type="entry name" value="Substrate Binding Domain Of DNAk, Chain A, domain 1"/>
    <property type="match status" value="1"/>
</dbReference>
<dbReference type="HAMAP" id="MF_00332">
    <property type="entry name" value="DnaK"/>
    <property type="match status" value="1"/>
</dbReference>
<dbReference type="InterPro" id="IPR043129">
    <property type="entry name" value="ATPase_NBD"/>
</dbReference>
<dbReference type="InterPro" id="IPR012725">
    <property type="entry name" value="Chaperone_DnaK"/>
</dbReference>
<dbReference type="InterPro" id="IPR018181">
    <property type="entry name" value="Heat_shock_70_CS"/>
</dbReference>
<dbReference type="InterPro" id="IPR029047">
    <property type="entry name" value="HSP70_peptide-bd_sf"/>
</dbReference>
<dbReference type="InterPro" id="IPR013126">
    <property type="entry name" value="Hsp_70_fam"/>
</dbReference>
<dbReference type="NCBIfam" id="NF001413">
    <property type="entry name" value="PRK00290.1"/>
    <property type="match status" value="1"/>
</dbReference>
<dbReference type="NCBIfam" id="TIGR02350">
    <property type="entry name" value="prok_dnaK"/>
    <property type="match status" value="1"/>
</dbReference>
<dbReference type="PANTHER" id="PTHR19375">
    <property type="entry name" value="HEAT SHOCK PROTEIN 70KDA"/>
    <property type="match status" value="1"/>
</dbReference>
<dbReference type="Pfam" id="PF00012">
    <property type="entry name" value="HSP70"/>
    <property type="match status" value="2"/>
</dbReference>
<dbReference type="PRINTS" id="PR00301">
    <property type="entry name" value="HEATSHOCK70"/>
</dbReference>
<dbReference type="SUPFAM" id="SSF53067">
    <property type="entry name" value="Actin-like ATPase domain"/>
    <property type="match status" value="2"/>
</dbReference>
<dbReference type="SUPFAM" id="SSF100920">
    <property type="entry name" value="Heat shock protein 70kD (HSP70), peptide-binding domain"/>
    <property type="match status" value="1"/>
</dbReference>
<dbReference type="PROSITE" id="PS00297">
    <property type="entry name" value="HSP70_1"/>
    <property type="match status" value="1"/>
</dbReference>
<dbReference type="PROSITE" id="PS00329">
    <property type="entry name" value="HSP70_2"/>
    <property type="match status" value="1"/>
</dbReference>
<dbReference type="PROSITE" id="PS01036">
    <property type="entry name" value="HSP70_3"/>
    <property type="match status" value="1"/>
</dbReference>
<accession>Q6MT06</accession>
<name>DNAK_MYCMS</name>
<proteinExistence type="inferred from homology"/>
<protein>
    <recommendedName>
        <fullName evidence="1">Chaperone protein DnaK</fullName>
    </recommendedName>
    <alternativeName>
        <fullName evidence="1">HSP70</fullName>
    </alternativeName>
    <alternativeName>
        <fullName evidence="1">Heat shock 70 kDa protein</fullName>
    </alternativeName>
    <alternativeName>
        <fullName evidence="1">Heat shock protein 70</fullName>
    </alternativeName>
</protein>